<sequence length="218" mass="23793">MSEKYTLSLEPRAVVGKKVKRLRRSGILPATVYGKGIEPISVQVDARSFNAVYRRAGRTALVELHIAGRQPLAAFIHALQRHPVTRDIIHADFRAVDLSQEVEVAVPLHIEGESPLVESGEAVLNQVLNAIEIRALPSNIPAHLTVDISGLDAFDKSIHVRDLALPPGVTLATPGDELVVSLAHARAAEEEAPAAEETTAEPELVRERREPRAEEEEE</sequence>
<accession>A7NI71</accession>
<organism>
    <name type="scientific">Roseiflexus castenholzii (strain DSM 13941 / HLO8)</name>
    <dbReference type="NCBI Taxonomy" id="383372"/>
    <lineage>
        <taxon>Bacteria</taxon>
        <taxon>Bacillati</taxon>
        <taxon>Chloroflexota</taxon>
        <taxon>Chloroflexia</taxon>
        <taxon>Chloroflexales</taxon>
        <taxon>Roseiflexineae</taxon>
        <taxon>Roseiflexaceae</taxon>
        <taxon>Roseiflexus</taxon>
    </lineage>
</organism>
<reference key="1">
    <citation type="submission" date="2007-08" db="EMBL/GenBank/DDBJ databases">
        <title>Complete sequence of Roseiflexus castenholzii DSM 13941.</title>
        <authorList>
            <consortium name="US DOE Joint Genome Institute"/>
            <person name="Copeland A."/>
            <person name="Lucas S."/>
            <person name="Lapidus A."/>
            <person name="Barry K."/>
            <person name="Glavina del Rio T."/>
            <person name="Dalin E."/>
            <person name="Tice H."/>
            <person name="Pitluck S."/>
            <person name="Thompson L.S."/>
            <person name="Brettin T."/>
            <person name="Bruce D."/>
            <person name="Detter J.C."/>
            <person name="Han C."/>
            <person name="Tapia R."/>
            <person name="Schmutz J."/>
            <person name="Larimer F."/>
            <person name="Land M."/>
            <person name="Hauser L."/>
            <person name="Kyrpides N."/>
            <person name="Mikhailova N."/>
            <person name="Bryant D.A."/>
            <person name="Hanada S."/>
            <person name="Tsukatani Y."/>
            <person name="Richardson P."/>
        </authorList>
    </citation>
    <scope>NUCLEOTIDE SEQUENCE [LARGE SCALE GENOMIC DNA]</scope>
    <source>
        <strain>DSM 13941 / HLO8</strain>
    </source>
</reference>
<keyword id="KW-1185">Reference proteome</keyword>
<keyword id="KW-0687">Ribonucleoprotein</keyword>
<keyword id="KW-0689">Ribosomal protein</keyword>
<keyword id="KW-0694">RNA-binding</keyword>
<keyword id="KW-0699">rRNA-binding</keyword>
<proteinExistence type="inferred from homology"/>
<gene>
    <name evidence="1" type="primary">rplY</name>
    <name evidence="1" type="synonym">ctc</name>
    <name type="ordered locus">Rcas_1070</name>
</gene>
<dbReference type="EMBL" id="CP000804">
    <property type="protein sequence ID" value="ABU57171.1"/>
    <property type="molecule type" value="Genomic_DNA"/>
</dbReference>
<dbReference type="RefSeq" id="WP_012119601.1">
    <property type="nucleotide sequence ID" value="NC_009767.1"/>
</dbReference>
<dbReference type="SMR" id="A7NI71"/>
<dbReference type="STRING" id="383372.Rcas_1070"/>
<dbReference type="KEGG" id="rca:Rcas_1070"/>
<dbReference type="eggNOG" id="COG1825">
    <property type="taxonomic scope" value="Bacteria"/>
</dbReference>
<dbReference type="HOGENOM" id="CLU_075939_2_0_0"/>
<dbReference type="OrthoDB" id="9790002at2"/>
<dbReference type="Proteomes" id="UP000000263">
    <property type="component" value="Chromosome"/>
</dbReference>
<dbReference type="GO" id="GO:0022625">
    <property type="term" value="C:cytosolic large ribosomal subunit"/>
    <property type="evidence" value="ECO:0007669"/>
    <property type="project" value="TreeGrafter"/>
</dbReference>
<dbReference type="GO" id="GO:0008097">
    <property type="term" value="F:5S rRNA binding"/>
    <property type="evidence" value="ECO:0007669"/>
    <property type="project" value="InterPro"/>
</dbReference>
<dbReference type="GO" id="GO:0003735">
    <property type="term" value="F:structural constituent of ribosome"/>
    <property type="evidence" value="ECO:0007669"/>
    <property type="project" value="InterPro"/>
</dbReference>
<dbReference type="GO" id="GO:0006412">
    <property type="term" value="P:translation"/>
    <property type="evidence" value="ECO:0007669"/>
    <property type="project" value="UniProtKB-UniRule"/>
</dbReference>
<dbReference type="CDD" id="cd00495">
    <property type="entry name" value="Ribosomal_L25_TL5_CTC"/>
    <property type="match status" value="1"/>
</dbReference>
<dbReference type="Gene3D" id="2.170.120.20">
    <property type="entry name" value="Ribosomal protein L25, beta domain"/>
    <property type="match status" value="1"/>
</dbReference>
<dbReference type="Gene3D" id="2.40.240.10">
    <property type="entry name" value="Ribosomal Protein L25, Chain P"/>
    <property type="match status" value="1"/>
</dbReference>
<dbReference type="HAMAP" id="MF_01334">
    <property type="entry name" value="Ribosomal_bL25_CTC"/>
    <property type="match status" value="1"/>
</dbReference>
<dbReference type="InterPro" id="IPR020056">
    <property type="entry name" value="Rbsml_bL25/Gln-tRNA_synth_N"/>
</dbReference>
<dbReference type="InterPro" id="IPR011035">
    <property type="entry name" value="Ribosomal_bL25/Gln-tRNA_synth"/>
</dbReference>
<dbReference type="InterPro" id="IPR020057">
    <property type="entry name" value="Ribosomal_bL25_b-dom"/>
</dbReference>
<dbReference type="InterPro" id="IPR037121">
    <property type="entry name" value="Ribosomal_bL25_C"/>
</dbReference>
<dbReference type="InterPro" id="IPR001021">
    <property type="entry name" value="Ribosomal_bL25_long"/>
</dbReference>
<dbReference type="InterPro" id="IPR029751">
    <property type="entry name" value="Ribosomal_L25_dom"/>
</dbReference>
<dbReference type="InterPro" id="IPR020930">
    <property type="entry name" value="Ribosomal_uL5_bac-type"/>
</dbReference>
<dbReference type="NCBIfam" id="TIGR00731">
    <property type="entry name" value="bL25_bact_ctc"/>
    <property type="match status" value="1"/>
</dbReference>
<dbReference type="PANTHER" id="PTHR33284">
    <property type="entry name" value="RIBOSOMAL PROTEIN L25/GLN-TRNA SYNTHETASE, ANTI-CODON-BINDING DOMAIN-CONTAINING PROTEIN"/>
    <property type="match status" value="1"/>
</dbReference>
<dbReference type="PANTHER" id="PTHR33284:SF1">
    <property type="entry name" value="RIBOSOMAL PROTEIN L25_GLN-TRNA SYNTHETASE, ANTI-CODON-BINDING DOMAIN-CONTAINING PROTEIN"/>
    <property type="match status" value="1"/>
</dbReference>
<dbReference type="Pfam" id="PF01386">
    <property type="entry name" value="Ribosomal_L25p"/>
    <property type="match status" value="1"/>
</dbReference>
<dbReference type="Pfam" id="PF14693">
    <property type="entry name" value="Ribosomal_TL5_C"/>
    <property type="match status" value="1"/>
</dbReference>
<dbReference type="SUPFAM" id="SSF50715">
    <property type="entry name" value="Ribosomal protein L25-like"/>
    <property type="match status" value="1"/>
</dbReference>
<feature type="chain" id="PRO_1000142553" description="Large ribosomal subunit protein bL25">
    <location>
        <begin position="1"/>
        <end position="218"/>
    </location>
</feature>
<feature type="region of interest" description="Disordered" evidence="2">
    <location>
        <begin position="185"/>
        <end position="218"/>
    </location>
</feature>
<feature type="compositionally biased region" description="Acidic residues" evidence="2">
    <location>
        <begin position="190"/>
        <end position="200"/>
    </location>
</feature>
<feature type="compositionally biased region" description="Basic and acidic residues" evidence="2">
    <location>
        <begin position="203"/>
        <end position="212"/>
    </location>
</feature>
<protein>
    <recommendedName>
        <fullName evidence="1">Large ribosomal subunit protein bL25</fullName>
    </recommendedName>
    <alternativeName>
        <fullName evidence="3">50S ribosomal protein L25</fullName>
    </alternativeName>
    <alternativeName>
        <fullName evidence="1">General stress protein CTC</fullName>
    </alternativeName>
</protein>
<comment type="function">
    <text evidence="1">This is one of the proteins that binds to the 5S RNA in the ribosome where it forms part of the central protuberance.</text>
</comment>
<comment type="subunit">
    <text evidence="1">Part of the 50S ribosomal subunit; part of the 5S rRNA/L5/L18/L25 subcomplex. Contacts the 5S rRNA. Binds to the 5S rRNA independently of L5 and L18.</text>
</comment>
<comment type="similarity">
    <text evidence="1">Belongs to the bacterial ribosomal protein bL25 family. CTC subfamily.</text>
</comment>
<evidence type="ECO:0000255" key="1">
    <source>
        <dbReference type="HAMAP-Rule" id="MF_01334"/>
    </source>
</evidence>
<evidence type="ECO:0000256" key="2">
    <source>
        <dbReference type="SAM" id="MobiDB-lite"/>
    </source>
</evidence>
<evidence type="ECO:0000305" key="3"/>
<name>RL25_ROSCS</name>